<comment type="function">
    <text evidence="2 4">Functions as a receptor binding protein (RBP) and probably mediates the attachment to the host capsular exopolysaccharides (Probable). Displays a depolymerase activity that specifically degrades the K8-type polysaccharides of Klebsiella pneumoniae capsule, which allows the phage to reach the host cell membrane and bind the entry receptor (PubMed:28676686).</text>
</comment>
<comment type="subunit">
    <text evidence="1">Interacts (via N-terminus) with depolymerase 2 (via N-terminus); this interaction probably gives rise to a branched tailspike.</text>
</comment>
<comment type="subcellular location">
    <subcellularLocation>
        <location evidence="1">Virion</location>
    </subcellularLocation>
    <text evidence="1">Tail appendage. Depolymerase 1 is connected to the phage tail via an N-terminal anchor domain, while depolymerase 2 is attached to depolymerase 1.</text>
</comment>
<comment type="domain">
    <text evidence="1 3">The N-terminus anchors the RBP to the virion (By similarity). The central part and C-terminus probably binds and degrades the host exopolysaccharides (Probable).</text>
</comment>
<comment type="similarity">
    <text evidence="3">In the N-terminal section; belongs to the Teseptimavirus fiber family.</text>
</comment>
<protein>
    <recommendedName>
        <fullName evidence="3">Depolymerase 1, capsule K8-specific</fullName>
    </recommendedName>
    <alternativeName>
        <fullName evidence="3">Gene product 37</fullName>
        <shortName evidence="3">gp37</shortName>
    </alternativeName>
    <alternativeName>
        <fullName evidence="3">Probable tail spike protein</fullName>
    </alternativeName>
</protein>
<keyword id="KW-1238">Degradation of host capsule during virus entry</keyword>
<keyword id="KW-1235">Degradation of host cell envelope components during virus entry</keyword>
<keyword id="KW-0945">Host-virus interaction</keyword>
<keyword id="KW-1233">Viral attachment to host adhesion receptor</keyword>
<keyword id="KW-1161">Viral attachment to host cell</keyword>
<keyword id="KW-1227">Viral tail protein</keyword>
<keyword id="KW-0946">Virion</keyword>
<keyword id="KW-1160">Virus entry into host cell</keyword>
<gene>
    <name evidence="5" type="ORF">k54_037</name>
</gene>
<feature type="chain" id="PRO_0000458715" description="Depolymerase 1, capsule K8-specific">
    <location>
        <begin position="1"/>
        <end position="749"/>
    </location>
</feature>
<evidence type="ECO:0000250" key="1">
    <source>
        <dbReference type="UniProtKB" id="D1L2X0"/>
    </source>
</evidence>
<evidence type="ECO:0000269" key="2">
    <source>
    </source>
</evidence>
<evidence type="ECO:0000305" key="3"/>
<evidence type="ECO:0000305" key="4">
    <source>
    </source>
</evidence>
<evidence type="ECO:0000312" key="5">
    <source>
        <dbReference type="EMBL" id="APZ82847.1"/>
    </source>
</evidence>
<sequence length="749" mass="80191">MDQDIKTVIQYPVGATEFDIPFDYLSRKFVRVSLVADDNRRLLSNITEYRYVSKTRVKLLVETTGFDRVEIRRFTSASERIVDFSDGSVLRAADLNVSQIQSAHIAEEARDAALMAMPEDDAGNLDARNRKIVRLAPGEAGTDAINKNQLDETLGEAGGILSDFEDVRDEIIQYISKFTDDTGAVRGVSYVYNNGRALGGETGFHIDITPPPLGVPYLSINGSKQYRGYHFTYDPITGNVQGLATPLEKDDFVVATTTESVTPIEDLYASTQGASMIGTLSGSTVEERIAEVEQSVLDSIDGIRVDSFIGMTDSGAIDAAIAEALRVNSYVKFSPRVYTVDRPVILPSKTVLVGTQGLTKIVASASWNGPVVMSKDAPAGDYLTINVPSAMVYGVYIFGIIIESGWKGTTDDSRYHTECLRIYGAGTILKGVRVGKCRGDGANLGGRGLTAIDYGAPSLYSDVRADLIGKNGITIGGSSDNHTQNIVVRNAGLLEHDVYYCIGIGPGGGTRGNEYHTWHSGDAQITPLYQNRPKYGLYLAGWDTYITNGHFEGAASAQIANFGGRNQVTNVRAYSTWDQDKCTVLVAGPAFKFVGNIGAPMNNVPANRCHAFQLGTADIQVNQVEITAQVNGQKFVNYVNAGGSNSIAVRGTLGIAGASGIGTLVTGTVPDDNELTIIAEPYKGKRLGLNLILTGDKGLTCRDVNSTGQISGVNALLTGKVMLTGLSSDIPTTPGTVYVDSNGNLKVKL</sequence>
<proteinExistence type="inferred from homology"/>
<accession>A0A219YHG0</accession>
<organismHost>
    <name type="scientific">Klebsiella</name>
    <dbReference type="NCBI Taxonomy" id="570"/>
</organismHost>
<name>DPOL1_BPK54</name>
<organism>
    <name type="scientific">Klebsiella phage K5-4</name>
    <name type="common">Bacteriophage K5-4</name>
    <dbReference type="NCBI Taxonomy" id="1932362"/>
    <lineage>
        <taxon>Viruses</taxon>
        <taxon>Duplodnaviria</taxon>
        <taxon>Heunggongvirae</taxon>
        <taxon>Uroviricota</taxon>
        <taxon>Caudoviricetes</taxon>
        <taxon>Autographiviridae</taxon>
        <taxon>Studiervirinae</taxon>
        <taxon>Przondovirus</taxon>
        <taxon>Przondovirus K54</taxon>
    </lineage>
</organism>
<reference key="1">
    <citation type="journal article" date="2017" name="Sci. Rep.">
        <title>Two T7-like Bacteriophages, K5-2 and K5-4, Each Encodes Two Capsule Depolymerases: Isolation and Functional Characterization.</title>
        <authorList>
            <person name="Hsieh P.F."/>
            <person name="Lin H.H."/>
            <person name="Lin T.L."/>
            <person name="Chen Y.Y."/>
            <person name="Wang J.T."/>
        </authorList>
    </citation>
    <scope>NUCLEOTIDE SEQUENCE [LARGE SCALE GENOMIC DNA]</scope>
    <scope>FUNCTION</scope>
</reference>
<reference key="2">
    <citation type="journal article" date="2019" name="Front. Microbiol.">
        <title>Modeling the Architecture of Depolymerase-Containing Receptor Binding Proteins in Klebsiella Phages.</title>
        <authorList>
            <person name="Latka A."/>
            <person name="Leiman P.G."/>
            <person name="Drulis-Kawa Z."/>
            <person name="Briers Y."/>
        </authorList>
    </citation>
    <scope>REVIEW</scope>
</reference>
<dbReference type="EMBL" id="KY389316">
    <property type="protein sequence ID" value="APZ82847.1"/>
    <property type="molecule type" value="Genomic_DNA"/>
</dbReference>
<dbReference type="SMR" id="A0A219YHG0"/>
<dbReference type="BRENDA" id="3.2.1.87">
    <property type="organism ID" value="16794"/>
</dbReference>
<dbReference type="Proteomes" id="UP000223201">
    <property type="component" value="Genome"/>
</dbReference>
<dbReference type="GO" id="GO:0098015">
    <property type="term" value="C:virus tail"/>
    <property type="evidence" value="ECO:0007669"/>
    <property type="project" value="UniProtKB-KW"/>
</dbReference>
<dbReference type="GO" id="GO:0098671">
    <property type="term" value="P:adhesion receptor-mediated virion attachment to host cell"/>
    <property type="evidence" value="ECO:0007669"/>
    <property type="project" value="UniProtKB-KW"/>
</dbReference>
<dbReference type="GO" id="GO:0098994">
    <property type="term" value="P:symbiont entry into host cell via disruption of host cell envelope"/>
    <property type="evidence" value="ECO:0007669"/>
    <property type="project" value="UniProtKB-KW"/>
</dbReference>
<dbReference type="GO" id="GO:0098996">
    <property type="term" value="P:symbiont entry into host cell via disruption of host cell glycocalyx"/>
    <property type="evidence" value="ECO:0007669"/>
    <property type="project" value="UniProtKB-KW"/>
</dbReference>
<dbReference type="InterPro" id="IPR011050">
    <property type="entry name" value="Pectin_lyase_fold/virulence"/>
</dbReference>
<dbReference type="InterPro" id="IPR005604">
    <property type="entry name" value="Phage_T7_tail_fibre-like_N"/>
</dbReference>
<dbReference type="Pfam" id="PF03906">
    <property type="entry name" value="Phage_T7_tail"/>
    <property type="match status" value="1"/>
</dbReference>
<dbReference type="SUPFAM" id="SSF51126">
    <property type="entry name" value="Pectin lyase-like"/>
    <property type="match status" value="1"/>
</dbReference>